<feature type="chain" id="PRO_0000165825" description="Cytosol aminopeptidase">
    <location>
        <begin position="1"/>
        <end position="519"/>
    </location>
</feature>
<feature type="active site" evidence="1">
    <location>
        <position position="294"/>
    </location>
</feature>
<feature type="active site" evidence="1">
    <location>
        <position position="368"/>
    </location>
</feature>
<feature type="binding site" evidence="1">
    <location>
        <position position="202"/>
    </location>
    <ligand>
        <name>Zn(2+)</name>
        <dbReference type="ChEBI" id="CHEBI:29105"/>
        <label>3</label>
        <note>structural</note>
    </ligand>
</feature>
<feature type="binding site" evidence="1">
    <location>
        <position position="203"/>
    </location>
    <ligand>
        <name>Zn(2+)</name>
        <dbReference type="ChEBI" id="CHEBI:29105"/>
        <label>3</label>
        <note>structural</note>
    </ligand>
</feature>
<feature type="binding site" evidence="1">
    <location>
        <position position="205"/>
    </location>
    <ligand>
        <name>Zn(2+)</name>
        <dbReference type="ChEBI" id="CHEBI:29105"/>
        <label>3</label>
        <note>structural</note>
    </ligand>
</feature>
<feature type="binding site" evidence="1">
    <location>
        <position position="282"/>
    </location>
    <ligand>
        <name>substrate</name>
    </ligand>
</feature>
<feature type="binding site" evidence="1">
    <location>
        <position position="282"/>
    </location>
    <ligand>
        <name>Zn(2+)</name>
        <dbReference type="ChEBI" id="CHEBI:29105"/>
        <label>2</label>
        <note>catalytic</note>
    </ligand>
</feature>
<feature type="binding site" evidence="1">
    <location>
        <position position="287"/>
    </location>
    <ligand>
        <name>Mg(2+)</name>
        <dbReference type="ChEBI" id="CHEBI:18420"/>
        <note>catalytic</note>
    </ligand>
</feature>
<feature type="binding site" evidence="1">
    <location>
        <position position="287"/>
    </location>
    <ligand>
        <name>substrate</name>
    </ligand>
</feature>
<feature type="binding site" evidence="1">
    <location>
        <position position="287"/>
    </location>
    <ligand>
        <name>Zn(2+)</name>
        <dbReference type="ChEBI" id="CHEBI:29105"/>
        <label>1</label>
        <note>catalytic</note>
    </ligand>
</feature>
<feature type="binding site" evidence="1">
    <location>
        <position position="287"/>
    </location>
    <ligand>
        <name>Zn(2+)</name>
        <dbReference type="ChEBI" id="CHEBI:29105"/>
        <label>2</label>
        <note>catalytic</note>
    </ligand>
</feature>
<feature type="binding site" evidence="1">
    <location>
        <position position="292"/>
    </location>
    <ligand>
        <name>substrate</name>
    </ligand>
</feature>
<feature type="binding site" evidence="1">
    <location>
        <position position="294"/>
    </location>
    <ligand>
        <name>substrate</name>
    </ligand>
</feature>
<feature type="binding site" evidence="1">
    <location>
        <position position="303"/>
    </location>
    <ligand>
        <name>Zn(2+)</name>
        <dbReference type="ChEBI" id="CHEBI:29105"/>
        <label>3</label>
        <note>structural</note>
    </ligand>
</feature>
<feature type="binding site" evidence="1">
    <location>
        <position position="305"/>
    </location>
    <ligand>
        <name>substrate</name>
    </ligand>
</feature>
<feature type="binding site" evidence="1">
    <location>
        <position position="305"/>
    </location>
    <ligand>
        <name>Zn(2+)</name>
        <dbReference type="ChEBI" id="CHEBI:29105"/>
        <label>2</label>
        <note>catalytic</note>
    </ligand>
</feature>
<feature type="binding site" evidence="1">
    <location>
        <position position="364"/>
    </location>
    <ligand>
        <name>Mg(2+)</name>
        <dbReference type="ChEBI" id="CHEBI:18420"/>
        <note>catalytic</note>
    </ligand>
</feature>
<feature type="binding site" evidence="1">
    <location>
        <position position="364"/>
    </location>
    <ligand>
        <name>substrate</name>
    </ligand>
</feature>
<feature type="binding site" evidence="1">
    <location>
        <position position="364"/>
    </location>
    <ligand>
        <name>Zn(2+)</name>
        <dbReference type="ChEBI" id="CHEBI:29105"/>
        <label>1</label>
        <note>catalytic</note>
    </ligand>
</feature>
<feature type="binding site" evidence="1">
    <location>
        <position position="366"/>
    </location>
    <ligand>
        <name>Mg(2+)</name>
        <dbReference type="ChEBI" id="CHEBI:18420"/>
        <note>catalytic</note>
    </ligand>
</feature>
<feature type="binding site" evidence="1">
    <location>
        <position position="366"/>
    </location>
    <ligand>
        <name>Zn(2+)</name>
        <dbReference type="ChEBI" id="CHEBI:29105"/>
        <label>1</label>
        <note>catalytic</note>
    </ligand>
</feature>
<feature type="binding site" evidence="1">
    <location>
        <position position="366"/>
    </location>
    <ligand>
        <name>Zn(2+)</name>
        <dbReference type="ChEBI" id="CHEBI:29105"/>
        <label>2</label>
        <note>catalytic</note>
    </ligand>
</feature>
<feature type="modified residue" description="Phosphoserine" evidence="3">
    <location>
        <position position="42"/>
    </location>
</feature>
<feature type="modified residue" description="N6-succinyllysine" evidence="4">
    <location>
        <position position="45"/>
    </location>
</feature>
<feature type="modified residue" description="Phosphoserine" evidence="3">
    <location>
        <position position="54"/>
    </location>
</feature>
<feature type="modified residue" description="N6-succinyllysine" evidence="4">
    <location>
        <position position="61"/>
    </location>
</feature>
<feature type="modified residue" description="N6-succinyllysine" evidence="4">
    <location>
        <position position="103"/>
    </location>
</feature>
<feature type="modified residue" description="Phosphoserine" evidence="4">
    <location>
        <position position="180"/>
    </location>
</feature>
<feature type="modified residue" description="Phosphoserine" evidence="12">
    <location>
        <position position="194"/>
    </location>
</feature>
<feature type="modified residue" description="N6-acetyllysine; alternate" evidence="10">
    <location>
        <position position="221"/>
    </location>
</feature>
<feature type="modified residue" description="N6-succinyllysine; alternate" evidence="4">
    <location>
        <position position="221"/>
    </location>
</feature>
<feature type="modified residue" description="Phosphoserine" evidence="11">
    <location>
        <position position="238"/>
    </location>
</feature>
<feature type="modified residue" description="N6-acetyllysine; alternate" evidence="4">
    <location>
        <position position="455"/>
    </location>
</feature>
<feature type="modified residue" description="N6-succinyllysine; alternate" evidence="4">
    <location>
        <position position="455"/>
    </location>
</feature>
<feature type="modified residue" description="N6-succinyllysine" evidence="4">
    <location>
        <position position="476"/>
    </location>
</feature>
<feature type="modified residue" description="N6-acetyllysine; alternate" evidence="4">
    <location>
        <position position="489"/>
    </location>
</feature>
<feature type="modified residue" description="N6-succinyllysine; alternate" evidence="4">
    <location>
        <position position="489"/>
    </location>
</feature>
<feature type="splice variant" id="VSP_022631" description="In isoform 2." evidence="5">
    <location>
        <begin position="1"/>
        <end position="31"/>
    </location>
</feature>
<feature type="sequence conflict" description="In Ref. 1; AAD17527." evidence="7" ref="1">
    <original>R</original>
    <variation>V</variation>
    <location>
        <position position="20"/>
    </location>
</feature>
<feature type="sequence conflict" description="In Ref. 1; AAD17527." evidence="7" ref="1">
    <original>F</original>
    <variation>S</variation>
    <location>
        <position position="22"/>
    </location>
</feature>
<feature type="sequence conflict" description="In Ref. 2; CAG33409." evidence="7" ref="2">
    <original>T</original>
    <variation>A</variation>
    <location>
        <position position="29"/>
    </location>
</feature>
<name>AMPL_HUMAN</name>
<organism>
    <name type="scientific">Homo sapiens</name>
    <name type="common">Human</name>
    <dbReference type="NCBI Taxonomy" id="9606"/>
    <lineage>
        <taxon>Eukaryota</taxon>
        <taxon>Metazoa</taxon>
        <taxon>Chordata</taxon>
        <taxon>Craniata</taxon>
        <taxon>Vertebrata</taxon>
        <taxon>Euteleostomi</taxon>
        <taxon>Mammalia</taxon>
        <taxon>Eutheria</taxon>
        <taxon>Euarchontoglires</taxon>
        <taxon>Primates</taxon>
        <taxon>Haplorrhini</taxon>
        <taxon>Catarrhini</taxon>
        <taxon>Hominidae</taxon>
        <taxon>Homo</taxon>
    </lineage>
</organism>
<keyword id="KW-0007">Acetylation</keyword>
<keyword id="KW-0024">Alternative initiation</keyword>
<keyword id="KW-0031">Aminopeptidase</keyword>
<keyword id="KW-0963">Cytoplasm</keyword>
<keyword id="KW-0903">Direct protein sequencing</keyword>
<keyword id="KW-0378">Hydrolase</keyword>
<keyword id="KW-0460">Magnesium</keyword>
<keyword id="KW-0464">Manganese</keyword>
<keyword id="KW-0479">Metal-binding</keyword>
<keyword id="KW-0597">Phosphoprotein</keyword>
<keyword id="KW-0645">Protease</keyword>
<keyword id="KW-1267">Proteomics identification</keyword>
<keyword id="KW-1185">Reference proteome</keyword>
<keyword id="KW-0862">Zinc</keyword>
<evidence type="ECO:0000250" key="1">
    <source>
        <dbReference type="UniProtKB" id="P00727"/>
    </source>
</evidence>
<evidence type="ECO:0000250" key="2">
    <source>
        <dbReference type="UniProtKB" id="P28839"/>
    </source>
</evidence>
<evidence type="ECO:0000250" key="3">
    <source>
        <dbReference type="UniProtKB" id="Q68FS4"/>
    </source>
</evidence>
<evidence type="ECO:0000250" key="4">
    <source>
        <dbReference type="UniProtKB" id="Q9CPY7"/>
    </source>
</evidence>
<evidence type="ECO:0000303" key="5">
    <source>
    </source>
</evidence>
<evidence type="ECO:0000303" key="6">
    <source>
    </source>
</evidence>
<evidence type="ECO:0000305" key="7"/>
<evidence type="ECO:0000305" key="8">
    <source>
    </source>
</evidence>
<evidence type="ECO:0000312" key="9">
    <source>
        <dbReference type="HGNC" id="HGNC:18449"/>
    </source>
</evidence>
<evidence type="ECO:0007744" key="10">
    <source>
    </source>
</evidence>
<evidence type="ECO:0007744" key="11">
    <source>
    </source>
</evidence>
<evidence type="ECO:0007744" key="12">
    <source>
    </source>
</evidence>
<comment type="function">
    <text evidence="1">Cytosolic metallopeptidase that catalyzes the removal of unsubstituted N-terminal hydrophobic amino acids from various peptides. The presence of Zn(2+) ions is essential for the peptidase activity, and the association with other cofactors can modulate the substrate spectificity of the enzyme. For instance, in the presence of Mn(2+), it displays a specific Cys-Gly hydrolyzing activity of Cys-Gly-S-conjugates. Involved in the metabolism of glutathione and in the degradation of glutathione S-conjugates, which may play a role in the control of the cell redox status.</text>
</comment>
<comment type="catalytic activity">
    <reaction evidence="8">
        <text>Release of an N-terminal amino acid, Xaa-|-Yaa-, in which Xaa is preferably Leu, but may be other amino acids including Pro although not Arg or Lys, and Yaa may be Pro. Amino acid amides and methyl esters are also readily hydrolyzed, but rates on arylamides are exceedingly low.</text>
        <dbReference type="EC" id="3.4.11.1"/>
    </reaction>
</comment>
<comment type="catalytic activity">
    <reaction evidence="1">
        <text>an S-substituted L-cysteinylglycine + H2O = an S-substituted L-cysteine + glycine</text>
        <dbReference type="Rhea" id="RHEA:60444"/>
        <dbReference type="ChEBI" id="CHEBI:15377"/>
        <dbReference type="ChEBI" id="CHEBI:57305"/>
        <dbReference type="ChEBI" id="CHEBI:58717"/>
        <dbReference type="ChEBI" id="CHEBI:143103"/>
        <dbReference type="EC" id="3.4.13.23"/>
    </reaction>
    <physiologicalReaction direction="left-to-right" evidence="1">
        <dbReference type="Rhea" id="RHEA:60445"/>
    </physiologicalReaction>
</comment>
<comment type="catalytic activity">
    <reaction evidence="1">
        <text>L-cysteinylglycine + H2O = L-cysteine + glycine</text>
        <dbReference type="Rhea" id="RHEA:28783"/>
        <dbReference type="ChEBI" id="CHEBI:15377"/>
        <dbReference type="ChEBI" id="CHEBI:35235"/>
        <dbReference type="ChEBI" id="CHEBI:57305"/>
        <dbReference type="ChEBI" id="CHEBI:61694"/>
    </reaction>
    <physiologicalReaction direction="left-to-right" evidence="1">
        <dbReference type="Rhea" id="RHEA:28784"/>
    </physiologicalReaction>
</comment>
<comment type="catalytic activity">
    <reaction evidence="3">
        <text>S-benzyl-L-cysteinylglycine + H2O = S-benzyl-L-cysteine + glycine</text>
        <dbReference type="Rhea" id="RHEA:62568"/>
        <dbReference type="ChEBI" id="CHEBI:15377"/>
        <dbReference type="ChEBI" id="CHEBI:57305"/>
        <dbReference type="ChEBI" id="CHEBI:145802"/>
        <dbReference type="ChEBI" id="CHEBI:145803"/>
    </reaction>
    <physiologicalReaction direction="left-to-right" evidence="3">
        <dbReference type="Rhea" id="RHEA:62569"/>
    </physiologicalReaction>
</comment>
<comment type="catalytic activity">
    <reaction evidence="2">
        <text>Release of N-terminal proline from a peptide.</text>
        <dbReference type="EC" id="3.4.11.5"/>
    </reaction>
</comment>
<comment type="cofactor">
    <cofactor evidence="1">
        <name>Zn(2+)</name>
        <dbReference type="ChEBI" id="CHEBI:29105"/>
    </cofactor>
    <cofactor evidence="1">
        <name>Mn(2+)</name>
        <dbReference type="ChEBI" id="CHEBI:29035"/>
    </cofactor>
    <text evidence="1">Binds two metal ions per subunit. Two metal binding sites with different affinities are located in the enzyme active site and can be occupied in vitro by different metals: site 1 is occupied by Zn(2+), Mn(2+), Mg(2+) or Co(2+), while the tight binding site 2 can be occupied by only Zn(2+) or Co(2+). One Zn(2+) ion is tightly bound to site 2 and essential for enzyme activity in vivo, while site 1 can be occupied by different metals to give different enzymatic activities. Mn(2+) is required for Cys-Gly hydrolysis activity. A third metal binding site may serve a structural role, possibly stabilizing part of the interface between the N-terminal and the catalytic domain.</text>
</comment>
<comment type="subunit">
    <text evidence="1">Homohexamer.</text>
</comment>
<comment type="interaction">
    <interactant intactId="EBI-2339312">
        <id>P28838</id>
    </interactant>
    <interactant intactId="EBI-11524452">
        <id>Q8N9N5-2</id>
        <label>BANP</label>
    </interactant>
    <organismsDiffer>false</organismsDiffer>
    <experiments>3</experiments>
</comment>
<comment type="interaction">
    <interactant intactId="EBI-2339312">
        <id>P28838</id>
    </interactant>
    <interactant intactId="EBI-78176">
        <id>Q13185</id>
        <label>CBX3</label>
    </interactant>
    <organismsDiffer>false</organismsDiffer>
    <experiments>6</experiments>
</comment>
<comment type="interaction">
    <interactant intactId="EBI-2339312">
        <id>P28838</id>
    </interactant>
    <interactant intactId="EBI-78219">
        <id>P45973</id>
        <label>CBX5</label>
    </interactant>
    <organismsDiffer>false</organismsDiffer>
    <experiments>3</experiments>
</comment>
<comment type="interaction">
    <interactant intactId="EBI-2339312">
        <id>P28838</id>
    </interactant>
    <interactant intactId="EBI-726739">
        <id>Q9UPY8</id>
        <label>MAPRE3</label>
    </interactant>
    <organismsDiffer>false</organismsDiffer>
    <experiments>3</experiments>
</comment>
<comment type="interaction">
    <interactant intactId="EBI-2339312">
        <id>P28838</id>
    </interactant>
    <interactant intactId="EBI-10232538">
        <id>Q8WWB5</id>
        <label>PIH1D2</label>
    </interactant>
    <organismsDiffer>false</organismsDiffer>
    <experiments>3</experiments>
</comment>
<comment type="interaction">
    <interactant intactId="EBI-2339312">
        <id>P28838</id>
    </interactant>
    <interactant intactId="EBI-79893">
        <id>Q92569</id>
        <label>PIK3R3</label>
    </interactant>
    <organismsDiffer>false</organismsDiffer>
    <experiments>3</experiments>
</comment>
<comment type="interaction">
    <interactant intactId="EBI-2339312">
        <id>P28838</id>
    </interactant>
    <interactant intactId="EBI-1054489">
        <id>P22415</id>
        <label>USF1</label>
    </interactant>
    <organismsDiffer>false</organismsDiffer>
    <experiments>3</experiments>
</comment>
<comment type="interaction">
    <interactant intactId="EBI-2339312">
        <id>P28838</id>
    </interactant>
    <interactant intactId="EBI-7254550">
        <id>P36508</id>
        <label>ZNF76</label>
    </interactant>
    <organismsDiffer>false</organismsDiffer>
    <experiments>3</experiments>
</comment>
<comment type="interaction">
    <interactant intactId="EBI-2339312">
        <id>P28838</id>
    </interactant>
    <interactant intactId="EBI-444225">
        <id>Q15942</id>
        <label>ZYX</label>
    </interactant>
    <organismsDiffer>false</organismsDiffer>
    <experiments>3</experiments>
</comment>
<comment type="interaction">
    <interactant intactId="EBI-2339312">
        <id>P28838</id>
    </interactant>
    <interactant intactId="EBI-25492395">
        <id>PRO_0000449633</id>
        <label>rep</label>
        <dbReference type="UniProtKB" id="P0DTD1"/>
    </interactant>
    <organismsDiffer>true</organismsDiffer>
    <experiments>3</experiments>
</comment>
<comment type="subcellular location">
    <subcellularLocation>
        <location evidence="3">Cytoplasm</location>
    </subcellularLocation>
</comment>
<comment type="alternative products">
    <event type="alternative initiation"/>
    <isoform>
        <id>P28838-1</id>
        <name>1</name>
        <sequence type="displayed"/>
    </isoform>
    <isoform>
        <id>P28838-2</id>
        <name>2</name>
        <sequence type="described" ref="VSP_022631"/>
    </isoform>
</comment>
<comment type="similarity">
    <text evidence="7">Belongs to the peptidase M17 family.</text>
</comment>
<gene>
    <name evidence="9" type="primary">LAP3</name>
    <name type="synonym">LAPEP</name>
    <name evidence="9" type="synonym">PEPS</name>
</gene>
<accession>P28838</accession>
<accession>B3KMQ3</accession>
<accession>Q6IAM6</accession>
<accession>Q6P0L6</accession>
<accession>Q9UQE3</accession>
<reference key="1">
    <citation type="submission" date="1998-04" db="EMBL/GenBank/DDBJ databases">
        <authorList>
            <person name="Mao M."/>
            <person name="Liu T."/>
            <person name="Zhang J."/>
            <person name="Wu J."/>
            <person name="Zhang Q."/>
            <person name="Fu G."/>
            <person name="Shen Y."/>
            <person name="Zhou J."/>
            <person name="Yu Y."/>
            <person name="Wang Z."/>
            <person name="Chen S."/>
            <person name="Chen Z."/>
        </authorList>
    </citation>
    <scope>NUCLEOTIDE SEQUENCE [MRNA] (ISOFORM 1)</scope>
</reference>
<reference key="2">
    <citation type="submission" date="2004-06" db="EMBL/GenBank/DDBJ databases">
        <title>Cloning of human full open reading frames in Gateway(TM) system entry vector (pDONR201).</title>
        <authorList>
            <person name="Ebert L."/>
            <person name="Schick M."/>
            <person name="Neubert P."/>
            <person name="Schatten R."/>
            <person name="Henze S."/>
            <person name="Korn B."/>
        </authorList>
    </citation>
    <scope>NUCLEOTIDE SEQUENCE [LARGE SCALE MRNA] (ISOFORM 1)</scope>
</reference>
<reference key="3">
    <citation type="journal article" date="2004" name="Nat. Genet.">
        <title>Complete sequencing and characterization of 21,243 full-length human cDNAs.</title>
        <authorList>
            <person name="Ota T."/>
            <person name="Suzuki Y."/>
            <person name="Nishikawa T."/>
            <person name="Otsuki T."/>
            <person name="Sugiyama T."/>
            <person name="Irie R."/>
            <person name="Wakamatsu A."/>
            <person name="Hayashi K."/>
            <person name="Sato H."/>
            <person name="Nagai K."/>
            <person name="Kimura K."/>
            <person name="Makita H."/>
            <person name="Sekine M."/>
            <person name="Obayashi M."/>
            <person name="Nishi T."/>
            <person name="Shibahara T."/>
            <person name="Tanaka T."/>
            <person name="Ishii S."/>
            <person name="Yamamoto J."/>
            <person name="Saito K."/>
            <person name="Kawai Y."/>
            <person name="Isono Y."/>
            <person name="Nakamura Y."/>
            <person name="Nagahari K."/>
            <person name="Murakami K."/>
            <person name="Yasuda T."/>
            <person name="Iwayanagi T."/>
            <person name="Wagatsuma M."/>
            <person name="Shiratori A."/>
            <person name="Sudo H."/>
            <person name="Hosoiri T."/>
            <person name="Kaku Y."/>
            <person name="Kodaira H."/>
            <person name="Kondo H."/>
            <person name="Sugawara M."/>
            <person name="Takahashi M."/>
            <person name="Kanda K."/>
            <person name="Yokoi T."/>
            <person name="Furuya T."/>
            <person name="Kikkawa E."/>
            <person name="Omura Y."/>
            <person name="Abe K."/>
            <person name="Kamihara K."/>
            <person name="Katsuta N."/>
            <person name="Sato K."/>
            <person name="Tanikawa M."/>
            <person name="Yamazaki M."/>
            <person name="Ninomiya K."/>
            <person name="Ishibashi T."/>
            <person name="Yamashita H."/>
            <person name="Murakawa K."/>
            <person name="Fujimori K."/>
            <person name="Tanai H."/>
            <person name="Kimata M."/>
            <person name="Watanabe M."/>
            <person name="Hiraoka S."/>
            <person name="Chiba Y."/>
            <person name="Ishida S."/>
            <person name="Ono Y."/>
            <person name="Takiguchi S."/>
            <person name="Watanabe S."/>
            <person name="Yosida M."/>
            <person name="Hotuta T."/>
            <person name="Kusano J."/>
            <person name="Kanehori K."/>
            <person name="Takahashi-Fujii A."/>
            <person name="Hara H."/>
            <person name="Tanase T.-O."/>
            <person name="Nomura Y."/>
            <person name="Togiya S."/>
            <person name="Komai F."/>
            <person name="Hara R."/>
            <person name="Takeuchi K."/>
            <person name="Arita M."/>
            <person name="Imose N."/>
            <person name="Musashino K."/>
            <person name="Yuuki H."/>
            <person name="Oshima A."/>
            <person name="Sasaki N."/>
            <person name="Aotsuka S."/>
            <person name="Yoshikawa Y."/>
            <person name="Matsunawa H."/>
            <person name="Ichihara T."/>
            <person name="Shiohata N."/>
            <person name="Sano S."/>
            <person name="Moriya S."/>
            <person name="Momiyama H."/>
            <person name="Satoh N."/>
            <person name="Takami S."/>
            <person name="Terashima Y."/>
            <person name="Suzuki O."/>
            <person name="Nakagawa S."/>
            <person name="Senoh A."/>
            <person name="Mizoguchi H."/>
            <person name="Goto Y."/>
            <person name="Shimizu F."/>
            <person name="Wakebe H."/>
            <person name="Hishigaki H."/>
            <person name="Watanabe T."/>
            <person name="Sugiyama A."/>
            <person name="Takemoto M."/>
            <person name="Kawakami B."/>
            <person name="Yamazaki M."/>
            <person name="Watanabe K."/>
            <person name="Kumagai A."/>
            <person name="Itakura S."/>
            <person name="Fukuzumi Y."/>
            <person name="Fujimori Y."/>
            <person name="Komiyama M."/>
            <person name="Tashiro H."/>
            <person name="Tanigami A."/>
            <person name="Fujiwara T."/>
            <person name="Ono T."/>
            <person name="Yamada K."/>
            <person name="Fujii Y."/>
            <person name="Ozaki K."/>
            <person name="Hirao M."/>
            <person name="Ohmori Y."/>
            <person name="Kawabata A."/>
            <person name="Hikiji T."/>
            <person name="Kobatake N."/>
            <person name="Inagaki H."/>
            <person name="Ikema Y."/>
            <person name="Okamoto S."/>
            <person name="Okitani R."/>
            <person name="Kawakami T."/>
            <person name="Noguchi S."/>
            <person name="Itoh T."/>
            <person name="Shigeta K."/>
            <person name="Senba T."/>
            <person name="Matsumura K."/>
            <person name="Nakajima Y."/>
            <person name="Mizuno T."/>
            <person name="Morinaga M."/>
            <person name="Sasaki M."/>
            <person name="Togashi T."/>
            <person name="Oyama M."/>
            <person name="Hata H."/>
            <person name="Watanabe M."/>
            <person name="Komatsu T."/>
            <person name="Mizushima-Sugano J."/>
            <person name="Satoh T."/>
            <person name="Shirai Y."/>
            <person name="Takahashi Y."/>
            <person name="Nakagawa K."/>
            <person name="Okumura K."/>
            <person name="Nagase T."/>
            <person name="Nomura N."/>
            <person name="Kikuchi H."/>
            <person name="Masuho Y."/>
            <person name="Yamashita R."/>
            <person name="Nakai K."/>
            <person name="Yada T."/>
            <person name="Nakamura Y."/>
            <person name="Ohara O."/>
            <person name="Isogai T."/>
            <person name="Sugano S."/>
        </authorList>
    </citation>
    <scope>NUCLEOTIDE SEQUENCE [LARGE SCALE MRNA] (ISOFORM 2)</scope>
    <source>
        <tissue>Embryo</tissue>
    </source>
</reference>
<reference key="4">
    <citation type="journal article" date="2004" name="Genome Res.">
        <title>The status, quality, and expansion of the NIH full-length cDNA project: the Mammalian Gene Collection (MGC).</title>
        <authorList>
            <consortium name="The MGC Project Team"/>
        </authorList>
    </citation>
    <scope>NUCLEOTIDE SEQUENCE [LARGE SCALE MRNA] (ISOFORM 1)</scope>
    <source>
        <tissue>Eye</tissue>
        <tissue>Lung</tissue>
    </source>
</reference>
<reference key="5">
    <citation type="journal article" date="1991" name="Biochem. Biophys. Res. Commun.">
        <title>Structural and immunological evidence for the identity of prolyl aminopeptidase with leucyl aminopeptidase.</title>
        <authorList>
            <person name="Matsushima M."/>
            <person name="Takahashi T."/>
            <person name="Ichinose M."/>
            <person name="Miki K."/>
            <person name="Kurokawa K."/>
            <person name="Takahashi K."/>
        </authorList>
    </citation>
    <scope>PROTEIN SEQUENCE OF 33-54</scope>
    <source>
        <tissue>Liver</tissue>
    </source>
</reference>
<reference key="6">
    <citation type="journal article" date="2009" name="Science">
        <title>Lysine acetylation targets protein complexes and co-regulates major cellular functions.</title>
        <authorList>
            <person name="Choudhary C."/>
            <person name="Kumar C."/>
            <person name="Gnad F."/>
            <person name="Nielsen M.L."/>
            <person name="Rehman M."/>
            <person name="Walther T.C."/>
            <person name="Olsen J.V."/>
            <person name="Mann M."/>
        </authorList>
    </citation>
    <scope>ACETYLATION [LARGE SCALE ANALYSIS] AT LYS-221</scope>
    <scope>IDENTIFICATION BY MASS SPECTROMETRY [LARGE SCALE ANALYSIS]</scope>
</reference>
<reference key="7">
    <citation type="journal article" date="2010" name="Sci. Signal.">
        <title>Quantitative phosphoproteomics reveals widespread full phosphorylation site occupancy during mitosis.</title>
        <authorList>
            <person name="Olsen J.V."/>
            <person name="Vermeulen M."/>
            <person name="Santamaria A."/>
            <person name="Kumar C."/>
            <person name="Miller M.L."/>
            <person name="Jensen L.J."/>
            <person name="Gnad F."/>
            <person name="Cox J."/>
            <person name="Jensen T.S."/>
            <person name="Nigg E.A."/>
            <person name="Brunak S."/>
            <person name="Mann M."/>
        </authorList>
    </citation>
    <scope>PHOSPHORYLATION [LARGE SCALE ANALYSIS] AT SER-238</scope>
    <scope>IDENTIFICATION BY MASS SPECTROMETRY [LARGE SCALE ANALYSIS]</scope>
    <source>
        <tissue>Cervix carcinoma</tissue>
    </source>
</reference>
<reference key="8">
    <citation type="journal article" date="2011" name="BMC Syst. Biol.">
        <title>Initial characterization of the human central proteome.</title>
        <authorList>
            <person name="Burkard T.R."/>
            <person name="Planyavsky M."/>
            <person name="Kaupe I."/>
            <person name="Breitwieser F.P."/>
            <person name="Buerckstuemmer T."/>
            <person name="Bennett K.L."/>
            <person name="Superti-Furga G."/>
            <person name="Colinge J."/>
        </authorList>
    </citation>
    <scope>IDENTIFICATION BY MASS SPECTROMETRY [LARGE SCALE ANALYSIS]</scope>
</reference>
<reference key="9">
    <citation type="journal article" date="2013" name="J. Proteome Res.">
        <title>Toward a comprehensive characterization of a human cancer cell phosphoproteome.</title>
        <authorList>
            <person name="Zhou H."/>
            <person name="Di Palma S."/>
            <person name="Preisinger C."/>
            <person name="Peng M."/>
            <person name="Polat A.N."/>
            <person name="Heck A.J."/>
            <person name="Mohammed S."/>
        </authorList>
    </citation>
    <scope>IDENTIFICATION BY MASS SPECTROMETRY [LARGE SCALE ANALYSIS]</scope>
    <source>
        <tissue>Erythroleukemia</tissue>
    </source>
</reference>
<reference key="10">
    <citation type="journal article" date="2014" name="J. Proteomics">
        <title>An enzyme assisted RP-RPLC approach for in-depth analysis of human liver phosphoproteome.</title>
        <authorList>
            <person name="Bian Y."/>
            <person name="Song C."/>
            <person name="Cheng K."/>
            <person name="Dong M."/>
            <person name="Wang F."/>
            <person name="Huang J."/>
            <person name="Sun D."/>
            <person name="Wang L."/>
            <person name="Ye M."/>
            <person name="Zou H."/>
        </authorList>
    </citation>
    <scope>PHOSPHORYLATION [LARGE SCALE ANALYSIS] AT SER-194</scope>
    <scope>IDENTIFICATION BY MASS SPECTROMETRY [LARGE SCALE ANALYSIS]</scope>
    <source>
        <tissue>Liver</tissue>
    </source>
</reference>
<reference key="11">
    <citation type="journal article" date="2015" name="Proteomics">
        <title>N-terminome analysis of the human mitochondrial proteome.</title>
        <authorList>
            <person name="Vaca Jacome A.S."/>
            <person name="Rabilloud T."/>
            <person name="Schaeffer-Reiss C."/>
            <person name="Rompais M."/>
            <person name="Ayoub D."/>
            <person name="Lane L."/>
            <person name="Bairoch A."/>
            <person name="Van Dorsselaer A."/>
            <person name="Carapito C."/>
        </authorList>
    </citation>
    <scope>IDENTIFICATION BY MASS SPECTROMETRY [LARGE SCALE ANALYSIS]</scope>
</reference>
<protein>
    <recommendedName>
        <fullName evidence="7">Cytosol aminopeptidase</fullName>
        <ecNumber evidence="1">3.4.11.1</ecNumber>
    </recommendedName>
    <alternativeName>
        <fullName evidence="1">Cysteinylglycine-S-conjugate dipeptidase</fullName>
        <ecNumber evidence="1">3.4.13.23</ecNumber>
    </alternativeName>
    <alternativeName>
        <fullName evidence="9">Leucine aminopeptidase 3</fullName>
        <shortName>LAP-3</shortName>
    </alternativeName>
    <alternativeName>
        <fullName evidence="1">Leucyl aminopeptidase</fullName>
    </alternativeName>
    <alternativeName>
        <fullName evidence="9">Peptidase S</fullName>
    </alternativeName>
    <alternativeName>
        <fullName evidence="2">Proline aminopeptidase</fullName>
        <ecNumber evidence="2">3.4.11.5</ecNumber>
    </alternativeName>
    <alternativeName>
        <fullName evidence="6">Prolyl aminopeptidase</fullName>
    </alternativeName>
</protein>
<sequence>MFLLPLPAAGRVVVRRLAVRRFGSRSLSTADMTKGLVLGIYSKEKEDDVPQFTSAGENFDKLLAGKLRETLNISGPPLKAGKTRTFYGLHQDFPSVVLVGLGKKAAGIDEQENWHEGKENIRAAVAAGCRQIQDLELSSVEVDPCGDAQAAAEGAVLGLYEYDDLKQKKKMAVSAKLYGSGDQEAWQKGVLFASGQNLARQLMETPANEMTPTRFAEIIEKNLKSASSKTEVHIRPKSWIEEQAMGSFLSVAKGSDEPPVFLEIHYKGSPNANEPPLVFVGKGITFDSGGISIKASANMDLMRADMGGAATICSAIVSAAKLNLPINIIGLAPLCENMPSGKANKPGDVVRAKNGKTIQVDNTDAEGRLILADALCYAHTFNPKVILNAATLTGAMDVALGSGATGVFTNSSWLWNKLFEASIETGDRVWRMPLFEHYTRQVVDCQLADVNNIGKYRSAGACTAAAFLKEFVTHPKWAHLDIAGVMTNKDEVPYLRKGMTGRPTRTLIEFLLRFSQDNA</sequence>
<proteinExistence type="evidence at protein level"/>
<dbReference type="EC" id="3.4.11.1" evidence="1"/>
<dbReference type="EC" id="3.4.13.23" evidence="1"/>
<dbReference type="EC" id="3.4.11.5" evidence="2"/>
<dbReference type="EMBL" id="AF061738">
    <property type="protein sequence ID" value="AAD17527.1"/>
    <property type="molecule type" value="mRNA"/>
</dbReference>
<dbReference type="EMBL" id="CR457128">
    <property type="protein sequence ID" value="CAG33409.1"/>
    <property type="molecule type" value="mRNA"/>
</dbReference>
<dbReference type="EMBL" id="AK022055">
    <property type="protein sequence ID" value="BAG51065.1"/>
    <property type="molecule type" value="mRNA"/>
</dbReference>
<dbReference type="EMBL" id="AK298613">
    <property type="protein sequence ID" value="BAG60795.1"/>
    <property type="molecule type" value="mRNA"/>
</dbReference>
<dbReference type="EMBL" id="BC065564">
    <property type="protein sequence ID" value="AAH65564.1"/>
    <property type="molecule type" value="mRNA"/>
</dbReference>
<dbReference type="EMBL" id="BC006199">
    <property type="protein sequence ID" value="AAH06199.3"/>
    <property type="molecule type" value="mRNA"/>
</dbReference>
<dbReference type="CCDS" id="CCDS3422.1">
    <molecule id="P28838-1"/>
</dbReference>
<dbReference type="PIR" id="PT0431">
    <property type="entry name" value="PT0431"/>
</dbReference>
<dbReference type="RefSeq" id="NP_056991.2">
    <molecule id="P28838-1"/>
    <property type="nucleotide sequence ID" value="NM_015907.2"/>
</dbReference>
<dbReference type="SMR" id="P28838"/>
<dbReference type="BioGRID" id="119248">
    <property type="interactions" value="119"/>
</dbReference>
<dbReference type="FunCoup" id="P28838">
    <property type="interactions" value="930"/>
</dbReference>
<dbReference type="IntAct" id="P28838">
    <property type="interactions" value="40"/>
</dbReference>
<dbReference type="MINT" id="P28838"/>
<dbReference type="STRING" id="9606.ENSP00000226299"/>
<dbReference type="BindingDB" id="P28838"/>
<dbReference type="ChEMBL" id="CHEMBL3965"/>
<dbReference type="DrugBank" id="DB07448">
    <property type="generic name" value="(2S)-3-[(R)-[(1S)-1-amino-3-phenylpropyl](hydroxy)phosphoryl]-2-benzylpropanoic acid"/>
</dbReference>
<dbReference type="DrugBank" id="DB02386">
    <property type="generic name" value="Leucine Phosphonic Acid"/>
</dbReference>
<dbReference type="DrugBank" id="DB08766">
    <property type="generic name" value="Zofenoprilat"/>
</dbReference>
<dbReference type="DrugCentral" id="P28838"/>
<dbReference type="MEROPS" id="M17.001"/>
<dbReference type="GlyGen" id="P28838">
    <property type="glycosylation" value="1 site, 1 O-linked glycan (1 site)"/>
</dbReference>
<dbReference type="iPTMnet" id="P28838"/>
<dbReference type="MetOSite" id="P28838"/>
<dbReference type="PhosphoSitePlus" id="P28838"/>
<dbReference type="SwissPalm" id="P28838"/>
<dbReference type="BioMuta" id="LAP3"/>
<dbReference type="DMDM" id="124028615"/>
<dbReference type="REPRODUCTION-2DPAGE" id="IPI00789806"/>
<dbReference type="REPRODUCTION-2DPAGE" id="P28838"/>
<dbReference type="jPOST" id="P28838"/>
<dbReference type="MassIVE" id="P28838"/>
<dbReference type="PaxDb" id="9606-ENSP00000226299"/>
<dbReference type="PeptideAtlas" id="P28838"/>
<dbReference type="ProteomicsDB" id="54502">
    <molecule id="P28838-1"/>
</dbReference>
<dbReference type="ProteomicsDB" id="54503">
    <molecule id="P28838-2"/>
</dbReference>
<dbReference type="Pumba" id="P28838"/>
<dbReference type="Antibodypedia" id="23080">
    <property type="antibodies" value="245 antibodies from 33 providers"/>
</dbReference>
<dbReference type="CPTC" id="P28838">
    <property type="antibodies" value="1 antibody"/>
</dbReference>
<dbReference type="DNASU" id="51056"/>
<dbReference type="Ensembl" id="ENST00000226299.9">
    <molecule id="P28838-1"/>
    <property type="protein sequence ID" value="ENSP00000226299.4"/>
    <property type="gene ID" value="ENSG00000002549.13"/>
</dbReference>
<dbReference type="Ensembl" id="ENST00000606142.5">
    <molecule id="P28838-2"/>
    <property type="protein sequence ID" value="ENSP00000476028.1"/>
    <property type="gene ID" value="ENSG00000002549.13"/>
</dbReference>
<dbReference type="Ensembl" id="ENST00000618908.4">
    <molecule id="P28838-1"/>
    <property type="protein sequence ID" value="ENSP00000481000.1"/>
    <property type="gene ID" value="ENSG00000002549.13"/>
</dbReference>
<dbReference type="GeneID" id="51056"/>
<dbReference type="KEGG" id="hsa:51056"/>
<dbReference type="MANE-Select" id="ENST00000226299.9">
    <property type="protein sequence ID" value="ENSP00000226299.4"/>
    <property type="RefSeq nucleotide sequence ID" value="NM_015907.3"/>
    <property type="RefSeq protein sequence ID" value="NP_056991.2"/>
</dbReference>
<dbReference type="UCSC" id="uc003gph.1">
    <molecule id="P28838-1"/>
    <property type="organism name" value="human"/>
</dbReference>
<dbReference type="AGR" id="HGNC:18449"/>
<dbReference type="CTD" id="51056"/>
<dbReference type="DisGeNET" id="51056"/>
<dbReference type="GeneCards" id="LAP3"/>
<dbReference type="HGNC" id="HGNC:18449">
    <property type="gene designation" value="LAP3"/>
</dbReference>
<dbReference type="HPA" id="ENSG00000002549">
    <property type="expression patterns" value="Low tissue specificity"/>
</dbReference>
<dbReference type="MIM" id="170250">
    <property type="type" value="gene"/>
</dbReference>
<dbReference type="neXtProt" id="NX_P28838"/>
<dbReference type="OpenTargets" id="ENSG00000002549"/>
<dbReference type="PharmGKB" id="PA38537"/>
<dbReference type="VEuPathDB" id="HostDB:ENSG00000002549"/>
<dbReference type="eggNOG" id="KOG2597">
    <property type="taxonomic scope" value="Eukaryota"/>
</dbReference>
<dbReference type="GeneTree" id="ENSGT00530000063255"/>
<dbReference type="HOGENOM" id="CLU_013734_1_2_1"/>
<dbReference type="InParanoid" id="P28838"/>
<dbReference type="OMA" id="WPMPLPE"/>
<dbReference type="OrthoDB" id="412814at2759"/>
<dbReference type="PAN-GO" id="P28838">
    <property type="GO annotations" value="3 GO annotations based on evolutionary models"/>
</dbReference>
<dbReference type="PhylomeDB" id="P28838"/>
<dbReference type="TreeFam" id="TF314954"/>
<dbReference type="BRENDA" id="3.4.11.1">
    <property type="organism ID" value="2681"/>
</dbReference>
<dbReference type="BRENDA" id="3.4.11.2">
    <property type="organism ID" value="2681"/>
</dbReference>
<dbReference type="PathwayCommons" id="P28838"/>
<dbReference type="SignaLink" id="P28838"/>
<dbReference type="SIGNOR" id="P28838"/>
<dbReference type="BioGRID-ORCS" id="51056">
    <property type="hits" value="19 hits in 1168 CRISPR screens"/>
</dbReference>
<dbReference type="CD-CODE" id="FB4E32DD">
    <property type="entry name" value="Presynaptic clusters and postsynaptic densities"/>
</dbReference>
<dbReference type="ChiTaRS" id="LAP3">
    <property type="organism name" value="human"/>
</dbReference>
<dbReference type="GenomeRNAi" id="51056"/>
<dbReference type="Pharos" id="P28838">
    <property type="development level" value="Tchem"/>
</dbReference>
<dbReference type="PRO" id="PR:P28838"/>
<dbReference type="Proteomes" id="UP000005640">
    <property type="component" value="Chromosome 4"/>
</dbReference>
<dbReference type="RNAct" id="P28838">
    <property type="molecule type" value="protein"/>
</dbReference>
<dbReference type="Bgee" id="ENSG00000002549">
    <property type="expression patterns" value="Expressed in palpebral conjunctiva and 209 other cell types or tissues"/>
</dbReference>
<dbReference type="ExpressionAtlas" id="P28838">
    <property type="expression patterns" value="baseline and differential"/>
</dbReference>
<dbReference type="GO" id="GO:0005737">
    <property type="term" value="C:cytoplasm"/>
    <property type="evidence" value="ECO:0000318"/>
    <property type="project" value="GO_Central"/>
</dbReference>
<dbReference type="GO" id="GO:0070062">
    <property type="term" value="C:extracellular exosome"/>
    <property type="evidence" value="ECO:0007005"/>
    <property type="project" value="UniProtKB"/>
</dbReference>
<dbReference type="GO" id="GO:0005925">
    <property type="term" value="C:focal adhesion"/>
    <property type="evidence" value="ECO:0007005"/>
    <property type="project" value="UniProtKB"/>
</dbReference>
<dbReference type="GO" id="GO:0005739">
    <property type="term" value="C:mitochondrion"/>
    <property type="evidence" value="ECO:0006056"/>
    <property type="project" value="FlyBase"/>
</dbReference>
<dbReference type="GO" id="GO:0005634">
    <property type="term" value="C:nucleus"/>
    <property type="evidence" value="ECO:0007005"/>
    <property type="project" value="UniProtKB"/>
</dbReference>
<dbReference type="GO" id="GO:0005802">
    <property type="term" value="C:trans-Golgi network"/>
    <property type="evidence" value="ECO:0007669"/>
    <property type="project" value="Ensembl"/>
</dbReference>
<dbReference type="GO" id="GO:0004177">
    <property type="term" value="F:aminopeptidase activity"/>
    <property type="evidence" value="ECO:0000303"/>
    <property type="project" value="UniProtKB"/>
</dbReference>
<dbReference type="GO" id="GO:0004180">
    <property type="term" value="F:carboxypeptidase activity"/>
    <property type="evidence" value="ECO:0007669"/>
    <property type="project" value="RHEA"/>
</dbReference>
<dbReference type="GO" id="GO:0030145">
    <property type="term" value="F:manganese ion binding"/>
    <property type="evidence" value="ECO:0007669"/>
    <property type="project" value="InterPro"/>
</dbReference>
<dbReference type="GO" id="GO:0070006">
    <property type="term" value="F:metalloaminopeptidase activity"/>
    <property type="evidence" value="ECO:0007669"/>
    <property type="project" value="InterPro"/>
</dbReference>
<dbReference type="GO" id="GO:0008235">
    <property type="term" value="F:metalloexopeptidase activity"/>
    <property type="evidence" value="ECO:0000303"/>
    <property type="project" value="UniProtKB"/>
</dbReference>
<dbReference type="GO" id="GO:0008233">
    <property type="term" value="F:peptidase activity"/>
    <property type="evidence" value="ECO:0000318"/>
    <property type="project" value="GO_Central"/>
</dbReference>
<dbReference type="GO" id="GO:0006508">
    <property type="term" value="P:proteolysis"/>
    <property type="evidence" value="ECO:0000318"/>
    <property type="project" value="GO_Central"/>
</dbReference>
<dbReference type="CDD" id="cd00433">
    <property type="entry name" value="Peptidase_M17"/>
    <property type="match status" value="1"/>
</dbReference>
<dbReference type="FunFam" id="3.40.220.10:FF:000005">
    <property type="entry name" value="cytosol aminopeptidase"/>
    <property type="match status" value="1"/>
</dbReference>
<dbReference type="FunFam" id="3.40.630.10:FF:000031">
    <property type="entry name" value="cytosol aminopeptidase"/>
    <property type="match status" value="1"/>
</dbReference>
<dbReference type="Gene3D" id="3.40.220.10">
    <property type="entry name" value="Leucine Aminopeptidase, subunit E, domain 1"/>
    <property type="match status" value="1"/>
</dbReference>
<dbReference type="Gene3D" id="3.40.630.10">
    <property type="entry name" value="Zn peptidases"/>
    <property type="match status" value="1"/>
</dbReference>
<dbReference type="HAMAP" id="MF_00181">
    <property type="entry name" value="Cytosol_peptidase_M17"/>
    <property type="match status" value="1"/>
</dbReference>
<dbReference type="InterPro" id="IPR011356">
    <property type="entry name" value="Leucine_aapep/pepB"/>
</dbReference>
<dbReference type="InterPro" id="IPR043472">
    <property type="entry name" value="Macro_dom-like"/>
</dbReference>
<dbReference type="InterPro" id="IPR000819">
    <property type="entry name" value="Peptidase_M17_C"/>
</dbReference>
<dbReference type="InterPro" id="IPR023042">
    <property type="entry name" value="Peptidase_M17_leu_NH2_pept"/>
</dbReference>
<dbReference type="InterPro" id="IPR008283">
    <property type="entry name" value="Peptidase_M17_N"/>
</dbReference>
<dbReference type="PANTHER" id="PTHR11963:SF39">
    <property type="entry name" value="CYTOSOL AMINOPEPTIDASE"/>
    <property type="match status" value="1"/>
</dbReference>
<dbReference type="PANTHER" id="PTHR11963">
    <property type="entry name" value="LEUCINE AMINOPEPTIDASE-RELATED"/>
    <property type="match status" value="1"/>
</dbReference>
<dbReference type="Pfam" id="PF00883">
    <property type="entry name" value="Peptidase_M17"/>
    <property type="match status" value="1"/>
</dbReference>
<dbReference type="Pfam" id="PF02789">
    <property type="entry name" value="Peptidase_M17_N"/>
    <property type="match status" value="1"/>
</dbReference>
<dbReference type="PRINTS" id="PR00481">
    <property type="entry name" value="LAMNOPPTDASE"/>
</dbReference>
<dbReference type="SUPFAM" id="SSF52949">
    <property type="entry name" value="Macro domain-like"/>
    <property type="match status" value="1"/>
</dbReference>
<dbReference type="SUPFAM" id="SSF53187">
    <property type="entry name" value="Zn-dependent exopeptidases"/>
    <property type="match status" value="1"/>
</dbReference>
<dbReference type="PROSITE" id="PS00631">
    <property type="entry name" value="CYTOSOL_AP"/>
    <property type="match status" value="1"/>
</dbReference>